<feature type="chain" id="PRO_0000206248" description="Uncharacterized protein PA0525">
    <location>
        <begin position="1"/>
        <end position="612"/>
    </location>
</feature>
<feature type="domain" description="VWFA" evidence="1">
    <location>
        <begin position="421"/>
        <end position="610"/>
    </location>
</feature>
<feature type="region of interest" description="Disordered" evidence="2">
    <location>
        <begin position="213"/>
        <end position="238"/>
    </location>
</feature>
<reference key="1">
    <citation type="journal article" date="1995" name="Biochim. Biophys. Acta">
        <title>The structural genes for nitric oxide reductase from Pseudomonas aeruginosa.</title>
        <authorList>
            <person name="Arai H."/>
            <person name="Igarashi Y."/>
            <person name="Kodama T."/>
        </authorList>
    </citation>
    <scope>NUCLEOTIDE SEQUENCE [GENOMIC DNA]</scope>
    <source>
        <strain>ATCC 15692 / DSM 22644 / CIP 104116 / JCM 14847 / LMG 12228 / 1C / PRS 101 / PAO1</strain>
    </source>
</reference>
<reference key="2">
    <citation type="journal article" date="2000" name="Nature">
        <title>Complete genome sequence of Pseudomonas aeruginosa PAO1, an opportunistic pathogen.</title>
        <authorList>
            <person name="Stover C.K."/>
            <person name="Pham X.-Q.T."/>
            <person name="Erwin A.L."/>
            <person name="Mizoguchi S.D."/>
            <person name="Warrener P."/>
            <person name="Hickey M.J."/>
            <person name="Brinkman F.S.L."/>
            <person name="Hufnagle W.O."/>
            <person name="Kowalik D.J."/>
            <person name="Lagrou M."/>
            <person name="Garber R.L."/>
            <person name="Goltry L."/>
            <person name="Tolentino E."/>
            <person name="Westbrock-Wadman S."/>
            <person name="Yuan Y."/>
            <person name="Brody L.L."/>
            <person name="Coulter S.N."/>
            <person name="Folger K.R."/>
            <person name="Kas A."/>
            <person name="Larbig K."/>
            <person name="Lim R.M."/>
            <person name="Smith K.A."/>
            <person name="Spencer D.H."/>
            <person name="Wong G.K.-S."/>
            <person name="Wu Z."/>
            <person name="Paulsen I.T."/>
            <person name="Reizer J."/>
            <person name="Saier M.H. Jr."/>
            <person name="Hancock R.E.W."/>
            <person name="Lory S."/>
            <person name="Olson M.V."/>
        </authorList>
    </citation>
    <scope>NUCLEOTIDE SEQUENCE [LARGE SCALE GENOMIC DNA]</scope>
    <source>
        <strain>ATCC 15692 / DSM 22644 / CIP 104116 / JCM 14847 / LMG 12228 / 1C / PRS 101 / PAO1</strain>
    </source>
</reference>
<reference key="3">
    <citation type="journal article" date="1995" name="FEBS Lett.">
        <title>Expression of the nir and nor genes for denitrification of Pseudomonas aeruginosa requires a novel CRP/FNR-related transcriptional regulator, DNR, in addition to ANR.</title>
        <authorList>
            <person name="Arai H."/>
            <person name="Igarashi Y."/>
            <person name="Kodama T."/>
        </authorList>
    </citation>
    <scope>NUCLEOTIDE SEQUENCE [GENOMIC DNA] OF 602-612</scope>
    <source>
        <strain>ATCC 15692 / DSM 22644 / CIP 104116 / JCM 14847 / LMG 12228 / 1C / PRS 101 / PAO1</strain>
    </source>
</reference>
<keyword id="KW-0963">Cytoplasm</keyword>
<keyword id="KW-1185">Reference proteome</keyword>
<name>Y525_PSEAE</name>
<accession>Q51484</accession>
<accession>Q9R7U8</accession>
<organism>
    <name type="scientific">Pseudomonas aeruginosa (strain ATCC 15692 / DSM 22644 / CIP 104116 / JCM 14847 / LMG 12228 / 1C / PRS 101 / PAO1)</name>
    <dbReference type="NCBI Taxonomy" id="208964"/>
    <lineage>
        <taxon>Bacteria</taxon>
        <taxon>Pseudomonadati</taxon>
        <taxon>Pseudomonadota</taxon>
        <taxon>Gammaproteobacteria</taxon>
        <taxon>Pseudomonadales</taxon>
        <taxon>Pseudomonadaceae</taxon>
        <taxon>Pseudomonas</taxon>
    </lineage>
</organism>
<proteinExistence type="predicted"/>
<protein>
    <recommendedName>
        <fullName>Uncharacterized protein PA0525</fullName>
    </recommendedName>
</protein>
<evidence type="ECO:0000255" key="1">
    <source>
        <dbReference type="PROSITE-ProRule" id="PRU00219"/>
    </source>
</evidence>
<evidence type="ECO:0000256" key="2">
    <source>
        <dbReference type="SAM" id="MobiDB-lite"/>
    </source>
</evidence>
<evidence type="ECO:0000305" key="3"/>
<gene>
    <name type="ordered locus">PA0525</name>
</gene>
<dbReference type="EMBL" id="D38133">
    <property type="protein sequence ID" value="BAA07331.1"/>
    <property type="molecule type" value="Genomic_DNA"/>
</dbReference>
<dbReference type="EMBL" id="AE004091">
    <property type="protein sequence ID" value="AAG03914.1"/>
    <property type="molecule type" value="Genomic_DNA"/>
</dbReference>
<dbReference type="EMBL" id="D50019">
    <property type="protein sequence ID" value="BAA08746.1"/>
    <property type="molecule type" value="Genomic_DNA"/>
</dbReference>
<dbReference type="PIR" id="S53714">
    <property type="entry name" value="S53714"/>
</dbReference>
<dbReference type="RefSeq" id="NP_249216.1">
    <property type="nucleotide sequence ID" value="NC_002516.2"/>
</dbReference>
<dbReference type="RefSeq" id="WP_003113236.1">
    <property type="nucleotide sequence ID" value="NZ_QZGE01000010.1"/>
</dbReference>
<dbReference type="STRING" id="208964.PA0525"/>
<dbReference type="PaxDb" id="208964-PA0525"/>
<dbReference type="GeneID" id="882190"/>
<dbReference type="KEGG" id="pae:PA0525"/>
<dbReference type="PATRIC" id="fig|208964.12.peg.555"/>
<dbReference type="PseudoCAP" id="PA0525"/>
<dbReference type="HOGENOM" id="CLU_024042_0_0_6"/>
<dbReference type="InParanoid" id="Q51484"/>
<dbReference type="OrthoDB" id="9758211at2"/>
<dbReference type="PhylomeDB" id="Q51484"/>
<dbReference type="BioCyc" id="PAER208964:G1FZ6-530-MONOMER"/>
<dbReference type="Proteomes" id="UP000002438">
    <property type="component" value="Chromosome"/>
</dbReference>
<dbReference type="GO" id="GO:0005737">
    <property type="term" value="C:cytoplasm"/>
    <property type="evidence" value="ECO:0007669"/>
    <property type="project" value="UniProtKB-SubCell"/>
</dbReference>
<dbReference type="CDD" id="cd01454">
    <property type="entry name" value="vWA_norD_type"/>
    <property type="match status" value="1"/>
</dbReference>
<dbReference type="Gene3D" id="3.40.50.410">
    <property type="entry name" value="von Willebrand factor, type A domain"/>
    <property type="match status" value="1"/>
</dbReference>
<dbReference type="InterPro" id="IPR051928">
    <property type="entry name" value="NorD/CobT"/>
</dbReference>
<dbReference type="InterPro" id="IPR002035">
    <property type="entry name" value="VWF_A"/>
</dbReference>
<dbReference type="InterPro" id="IPR036465">
    <property type="entry name" value="vWFA_dom_sf"/>
</dbReference>
<dbReference type="PANTHER" id="PTHR41248">
    <property type="entry name" value="NORD PROTEIN"/>
    <property type="match status" value="1"/>
</dbReference>
<dbReference type="PANTHER" id="PTHR41248:SF1">
    <property type="entry name" value="NORD PROTEIN"/>
    <property type="match status" value="1"/>
</dbReference>
<dbReference type="Pfam" id="PF00092">
    <property type="entry name" value="VWA"/>
    <property type="match status" value="1"/>
</dbReference>
<dbReference type="SMART" id="SM00327">
    <property type="entry name" value="VWA"/>
    <property type="match status" value="1"/>
</dbReference>
<dbReference type="SUPFAM" id="SSF53300">
    <property type="entry name" value="vWA-like"/>
    <property type="match status" value="1"/>
</dbReference>
<dbReference type="PROSITE" id="PS50234">
    <property type="entry name" value="VWFA"/>
    <property type="match status" value="1"/>
</dbReference>
<sequence length="612" mass="69467">MAFAVELEEWVGAHWHRFITRHASGEFEAARVTLESMRRPLGMLFRALGGAPGVALEATPARRLLLRRTWLQRVAGTCEQAPVSWFNGDSLRLPESLAVYPQAELNRELYRWLALLAASAGPLRHWAQDNQRWARQLLDAYPALRPRYARLVAAHLRQRPSLDDCPAADAELEIALRRALAEPGSVERFPRVERAPWPVPLWLYPGERWTPSASAEDGEEAAAGAGKRQVARSGARKRAERIEERNSERNLLLFRLESLLSWSEHLALDRCSDDEDDPDGARVAEDLDYLSLSRQRTQKGGGLRLDLDLPAADYDDLPLGPGLKLPEWDYRQQRLLSDHVLLQPMRPRGATSASLPAHLEKTALHLRRQFACLRDGRQRLRQQPQGDEIDLDAWLDFQVERRRGGSTQPGLFLEQRPRRRDLACLLLADLSMSTEAYLDDQRRVIDSIVDSLLLFGEALQALGDPFALYGFSSVRRQQVRWQVLKDFDEGYGGEVRGRVLALSPGYYTRMGAAIRRASQVLGGQPQKRRLLLLLSDGKPNDLDRYEGRYGIEDTRQAVIEARSQGLVPFCITIDKEAADYLPYLFGADGFALVERAGQLPERLLQLYRRLRR</sequence>
<comment type="function">
    <text>Component of the anaerobic respiratory chain that transforms nitrate to dinitrogen (denitrification). Function unknown, but essential for the denitrification process.</text>
</comment>
<comment type="subcellular location">
    <subcellularLocation>
        <location evidence="3">Cytoplasm</location>
    </subcellularLocation>
</comment>